<feature type="chain" id="PRO_1000092710" description="Imidazoleglycerol-phosphate dehydratase">
    <location>
        <begin position="1"/>
        <end position="197"/>
    </location>
</feature>
<reference key="1">
    <citation type="submission" date="2008-02" db="EMBL/GenBank/DDBJ databases">
        <title>Complete sequence of Pseudomonas putida W619.</title>
        <authorList>
            <person name="Copeland A."/>
            <person name="Lucas S."/>
            <person name="Lapidus A."/>
            <person name="Barry K."/>
            <person name="Detter J.C."/>
            <person name="Glavina del Rio T."/>
            <person name="Dalin E."/>
            <person name="Tice H."/>
            <person name="Pitluck S."/>
            <person name="Chain P."/>
            <person name="Malfatti S."/>
            <person name="Shin M."/>
            <person name="Vergez L."/>
            <person name="Schmutz J."/>
            <person name="Larimer F."/>
            <person name="Land M."/>
            <person name="Hauser L."/>
            <person name="Kyrpides N."/>
            <person name="Kim E."/>
            <person name="Taghavi S."/>
            <person name="Vangronsveld D."/>
            <person name="van der Lelie D."/>
            <person name="Richardson P."/>
        </authorList>
    </citation>
    <scope>NUCLEOTIDE SEQUENCE [LARGE SCALE GENOMIC DNA]</scope>
    <source>
        <strain>W619</strain>
    </source>
</reference>
<name>HIS7_PSEPW</name>
<evidence type="ECO:0000255" key="1">
    <source>
        <dbReference type="HAMAP-Rule" id="MF_00076"/>
    </source>
</evidence>
<protein>
    <recommendedName>
        <fullName evidence="1">Imidazoleglycerol-phosphate dehydratase</fullName>
        <shortName evidence="1">IGPD</shortName>
        <ecNumber evidence="1">4.2.1.19</ecNumber>
    </recommendedName>
</protein>
<comment type="catalytic activity">
    <reaction evidence="1">
        <text>D-erythro-1-(imidazol-4-yl)glycerol 3-phosphate = 3-(imidazol-4-yl)-2-oxopropyl phosphate + H2O</text>
        <dbReference type="Rhea" id="RHEA:11040"/>
        <dbReference type="ChEBI" id="CHEBI:15377"/>
        <dbReference type="ChEBI" id="CHEBI:57766"/>
        <dbReference type="ChEBI" id="CHEBI:58278"/>
        <dbReference type="EC" id="4.2.1.19"/>
    </reaction>
</comment>
<comment type="pathway">
    <text evidence="1">Amino-acid biosynthesis; L-histidine biosynthesis; L-histidine from 5-phospho-alpha-D-ribose 1-diphosphate: step 6/9.</text>
</comment>
<comment type="subcellular location">
    <subcellularLocation>
        <location evidence="1">Cytoplasm</location>
    </subcellularLocation>
</comment>
<comment type="similarity">
    <text evidence="1">Belongs to the imidazoleglycerol-phosphate dehydratase family.</text>
</comment>
<accession>B1JED5</accession>
<dbReference type="EC" id="4.2.1.19" evidence="1"/>
<dbReference type="EMBL" id="CP000949">
    <property type="protein sequence ID" value="ACA75395.1"/>
    <property type="molecule type" value="Genomic_DNA"/>
</dbReference>
<dbReference type="SMR" id="B1JED5"/>
<dbReference type="STRING" id="390235.PputW619_4919"/>
<dbReference type="KEGG" id="ppw:PputW619_4919"/>
<dbReference type="eggNOG" id="COG0131">
    <property type="taxonomic scope" value="Bacteria"/>
</dbReference>
<dbReference type="HOGENOM" id="CLU_044308_3_0_6"/>
<dbReference type="OrthoDB" id="9790411at2"/>
<dbReference type="UniPathway" id="UPA00031">
    <property type="reaction ID" value="UER00011"/>
</dbReference>
<dbReference type="GO" id="GO:0005737">
    <property type="term" value="C:cytoplasm"/>
    <property type="evidence" value="ECO:0007669"/>
    <property type="project" value="UniProtKB-SubCell"/>
</dbReference>
<dbReference type="GO" id="GO:0004424">
    <property type="term" value="F:imidazoleglycerol-phosphate dehydratase activity"/>
    <property type="evidence" value="ECO:0007669"/>
    <property type="project" value="UniProtKB-UniRule"/>
</dbReference>
<dbReference type="GO" id="GO:0000105">
    <property type="term" value="P:L-histidine biosynthetic process"/>
    <property type="evidence" value="ECO:0007669"/>
    <property type="project" value="UniProtKB-UniRule"/>
</dbReference>
<dbReference type="CDD" id="cd07914">
    <property type="entry name" value="IGPD"/>
    <property type="match status" value="1"/>
</dbReference>
<dbReference type="FunFam" id="3.30.230.40:FF:000002">
    <property type="entry name" value="Imidazoleglycerol-phosphate dehydratase"/>
    <property type="match status" value="1"/>
</dbReference>
<dbReference type="FunFam" id="3.30.230.40:FF:000003">
    <property type="entry name" value="Imidazoleglycerol-phosphate dehydratase HisB"/>
    <property type="match status" value="1"/>
</dbReference>
<dbReference type="Gene3D" id="3.30.230.40">
    <property type="entry name" value="Imidazole glycerol phosphate dehydratase, domain 1"/>
    <property type="match status" value="2"/>
</dbReference>
<dbReference type="HAMAP" id="MF_00076">
    <property type="entry name" value="HisB"/>
    <property type="match status" value="1"/>
</dbReference>
<dbReference type="InterPro" id="IPR038494">
    <property type="entry name" value="IGPD_sf"/>
</dbReference>
<dbReference type="InterPro" id="IPR000807">
    <property type="entry name" value="ImidazoleglycerolP_deHydtase"/>
</dbReference>
<dbReference type="InterPro" id="IPR020565">
    <property type="entry name" value="ImidazoleglycerP_deHydtase_CS"/>
</dbReference>
<dbReference type="InterPro" id="IPR020568">
    <property type="entry name" value="Ribosomal_Su5_D2-typ_SF"/>
</dbReference>
<dbReference type="NCBIfam" id="NF002106">
    <property type="entry name" value="PRK00951.1-1"/>
    <property type="match status" value="1"/>
</dbReference>
<dbReference type="NCBIfam" id="NF002111">
    <property type="entry name" value="PRK00951.2-1"/>
    <property type="match status" value="1"/>
</dbReference>
<dbReference type="NCBIfam" id="NF002114">
    <property type="entry name" value="PRK00951.2-4"/>
    <property type="match status" value="1"/>
</dbReference>
<dbReference type="PANTHER" id="PTHR23133:SF2">
    <property type="entry name" value="IMIDAZOLEGLYCEROL-PHOSPHATE DEHYDRATASE"/>
    <property type="match status" value="1"/>
</dbReference>
<dbReference type="PANTHER" id="PTHR23133">
    <property type="entry name" value="IMIDAZOLEGLYCEROL-PHOSPHATE DEHYDRATASE HIS7"/>
    <property type="match status" value="1"/>
</dbReference>
<dbReference type="Pfam" id="PF00475">
    <property type="entry name" value="IGPD"/>
    <property type="match status" value="1"/>
</dbReference>
<dbReference type="SUPFAM" id="SSF54211">
    <property type="entry name" value="Ribosomal protein S5 domain 2-like"/>
    <property type="match status" value="2"/>
</dbReference>
<dbReference type="PROSITE" id="PS00954">
    <property type="entry name" value="IGP_DEHYDRATASE_1"/>
    <property type="match status" value="1"/>
</dbReference>
<dbReference type="PROSITE" id="PS00955">
    <property type="entry name" value="IGP_DEHYDRATASE_2"/>
    <property type="match status" value="1"/>
</dbReference>
<proteinExistence type="inferred from homology"/>
<gene>
    <name evidence="1" type="primary">hisB</name>
    <name type="ordered locus">PputW619_4919</name>
</gene>
<sequence length="197" mass="21967">MVERKASVERNTLETQVKCSINLDGSGKARFDIGVPFLEHMLDQIARHGLIDLDIECKGDLHIDDHHTVEDVGITLGQAFAQAIGDKKGIFRYGHAYVPLDEALSRVVIDFSGRPGLQMHVPYTRATVGGFDVDLFQEFFQGFVNHALVTLHIDNLRGHNTHHQIETVFKAFGRALRMAVTQDERMAGQMPSTKGCL</sequence>
<keyword id="KW-0028">Amino-acid biosynthesis</keyword>
<keyword id="KW-0963">Cytoplasm</keyword>
<keyword id="KW-0368">Histidine biosynthesis</keyword>
<keyword id="KW-0456">Lyase</keyword>
<organism>
    <name type="scientific">Pseudomonas putida (strain W619)</name>
    <dbReference type="NCBI Taxonomy" id="390235"/>
    <lineage>
        <taxon>Bacteria</taxon>
        <taxon>Pseudomonadati</taxon>
        <taxon>Pseudomonadota</taxon>
        <taxon>Gammaproteobacteria</taxon>
        <taxon>Pseudomonadales</taxon>
        <taxon>Pseudomonadaceae</taxon>
        <taxon>Pseudomonas</taxon>
    </lineage>
</organism>